<organism>
    <name type="scientific">Streptomyces coelicolor (strain ATCC BAA-471 / A3(2) / M145)</name>
    <dbReference type="NCBI Taxonomy" id="100226"/>
    <lineage>
        <taxon>Bacteria</taxon>
        <taxon>Bacillati</taxon>
        <taxon>Actinomycetota</taxon>
        <taxon>Actinomycetes</taxon>
        <taxon>Kitasatosporales</taxon>
        <taxon>Streptomycetaceae</taxon>
        <taxon>Streptomyces</taxon>
        <taxon>Streptomyces albidoflavus group</taxon>
    </lineage>
</organism>
<dbReference type="EC" id="4.1.99.17" evidence="1"/>
<dbReference type="EMBL" id="AL939118">
    <property type="protein sequence ID" value="CAB46966.1"/>
    <property type="molecule type" value="Genomic_DNA"/>
</dbReference>
<dbReference type="PIR" id="T37181">
    <property type="entry name" value="T37181"/>
</dbReference>
<dbReference type="RefSeq" id="NP_628113.1">
    <property type="nucleotide sequence ID" value="NC_003888.3"/>
</dbReference>
<dbReference type="RefSeq" id="WP_011029315.1">
    <property type="nucleotide sequence ID" value="NZ_VNID01000003.1"/>
</dbReference>
<dbReference type="SMR" id="Q9X9U0"/>
<dbReference type="FunCoup" id="Q9X9U0">
    <property type="interactions" value="258"/>
</dbReference>
<dbReference type="STRING" id="100226.gene:17761555"/>
<dbReference type="PaxDb" id="100226-SCO3928"/>
<dbReference type="KEGG" id="sco:SCO3928"/>
<dbReference type="PATRIC" id="fig|100226.15.peg.4002"/>
<dbReference type="eggNOG" id="COG0422">
    <property type="taxonomic scope" value="Bacteria"/>
</dbReference>
<dbReference type="HOGENOM" id="CLU_013181_2_1_11"/>
<dbReference type="InParanoid" id="Q9X9U0"/>
<dbReference type="OrthoDB" id="9805897at2"/>
<dbReference type="PhylomeDB" id="Q9X9U0"/>
<dbReference type="UniPathway" id="UPA00060"/>
<dbReference type="Proteomes" id="UP000001973">
    <property type="component" value="Chromosome"/>
</dbReference>
<dbReference type="GO" id="GO:0005829">
    <property type="term" value="C:cytosol"/>
    <property type="evidence" value="ECO:0000318"/>
    <property type="project" value="GO_Central"/>
</dbReference>
<dbReference type="GO" id="GO:0051539">
    <property type="term" value="F:4 iron, 4 sulfur cluster binding"/>
    <property type="evidence" value="ECO:0007669"/>
    <property type="project" value="UniProtKB-KW"/>
</dbReference>
<dbReference type="GO" id="GO:0016830">
    <property type="term" value="F:carbon-carbon lyase activity"/>
    <property type="evidence" value="ECO:0007669"/>
    <property type="project" value="InterPro"/>
</dbReference>
<dbReference type="GO" id="GO:0008270">
    <property type="term" value="F:zinc ion binding"/>
    <property type="evidence" value="ECO:0007669"/>
    <property type="project" value="UniProtKB-UniRule"/>
</dbReference>
<dbReference type="GO" id="GO:0009228">
    <property type="term" value="P:thiamine biosynthetic process"/>
    <property type="evidence" value="ECO:0000318"/>
    <property type="project" value="GO_Central"/>
</dbReference>
<dbReference type="GO" id="GO:0009229">
    <property type="term" value="P:thiamine diphosphate biosynthetic process"/>
    <property type="evidence" value="ECO:0007669"/>
    <property type="project" value="UniProtKB-UniRule"/>
</dbReference>
<dbReference type="FunFam" id="3.20.20.540:FF:000001">
    <property type="entry name" value="Phosphomethylpyrimidine synthase"/>
    <property type="match status" value="1"/>
</dbReference>
<dbReference type="Gene3D" id="6.10.250.620">
    <property type="match status" value="1"/>
</dbReference>
<dbReference type="Gene3D" id="3.20.20.540">
    <property type="entry name" value="Radical SAM ThiC family, central domain"/>
    <property type="match status" value="1"/>
</dbReference>
<dbReference type="HAMAP" id="MF_00089">
    <property type="entry name" value="ThiC"/>
    <property type="match status" value="1"/>
</dbReference>
<dbReference type="InterPro" id="IPR037509">
    <property type="entry name" value="ThiC"/>
</dbReference>
<dbReference type="InterPro" id="IPR025747">
    <property type="entry name" value="ThiC-associated_dom"/>
</dbReference>
<dbReference type="InterPro" id="IPR038521">
    <property type="entry name" value="ThiC/Bza_core_dom"/>
</dbReference>
<dbReference type="InterPro" id="IPR002817">
    <property type="entry name" value="ThiC/BzaA/B"/>
</dbReference>
<dbReference type="NCBIfam" id="NF006763">
    <property type="entry name" value="PRK09284.1"/>
    <property type="match status" value="1"/>
</dbReference>
<dbReference type="NCBIfam" id="NF009895">
    <property type="entry name" value="PRK13352.1"/>
    <property type="match status" value="1"/>
</dbReference>
<dbReference type="NCBIfam" id="TIGR00190">
    <property type="entry name" value="thiC"/>
    <property type="match status" value="1"/>
</dbReference>
<dbReference type="PANTHER" id="PTHR30557:SF1">
    <property type="entry name" value="PHOSPHOMETHYLPYRIMIDINE SYNTHASE, CHLOROPLASTIC"/>
    <property type="match status" value="1"/>
</dbReference>
<dbReference type="PANTHER" id="PTHR30557">
    <property type="entry name" value="THIAMINE BIOSYNTHESIS PROTEIN THIC"/>
    <property type="match status" value="1"/>
</dbReference>
<dbReference type="Pfam" id="PF13667">
    <property type="entry name" value="ThiC-associated"/>
    <property type="match status" value="1"/>
</dbReference>
<dbReference type="Pfam" id="PF01964">
    <property type="entry name" value="ThiC_Rad_SAM"/>
    <property type="match status" value="1"/>
</dbReference>
<dbReference type="SFLD" id="SFLDF00407">
    <property type="entry name" value="phosphomethylpyrimidine_syntha"/>
    <property type="match status" value="1"/>
</dbReference>
<dbReference type="SFLD" id="SFLDG01114">
    <property type="entry name" value="phosphomethylpyrimidine_syntha"/>
    <property type="match status" value="1"/>
</dbReference>
<dbReference type="SFLD" id="SFLDS00113">
    <property type="entry name" value="Radical_SAM_Phosphomethylpyrim"/>
    <property type="match status" value="1"/>
</dbReference>
<sequence>MTIKDARTPASTQNTAQADTAENTDTAEDTEAGKSIGWHKAYVEGSRPDLRVPVRQVHLTNGQSVTLYDTSGPYTDPLVDTDVRRGLAPLRENWIIARGDTEEYAGRPVRPEDDGIKHTSPRGGLRNLDAVFPGRPRQPRRGRDGNAVTQLAYARRGEITPEMEYVAVRENVSPEVVREEIAAGRAVLPANINHPEIEPMIIGKRFLVKVNANIGNSAVTSSIEEEVDKMTWATRWGADTVMDLSTGRNIHTTREWVLRNSPVPIGTVPLYQALEKVDGRAEELTWEIYKDTVIEQAEQGVDYMTVHAGVRLPYVPLTANRKTGIVSRGGSIMAAWCLAHHKESFLYENFEELCEILAAYDVTYSLGDGLRPGSIADANDEAQFAELRTLGELNRIAKRCSVQTMIEGPGHVPMHKIKENIDLQQEICDEAPFYTLGPLTTDVAPAYDHITSGIGAAMIAWWGTAMLCYVTPKEHLGLPNRDDVKTGVITYKIAAHAADLAKGHPGAQEWDDALSDARFEFRWEDQFNLALDPDTAREFHDETLPAEPAKTAHFCSMCGPKFCSMKISQSITEQFGGTAAAGATAEEVAAGMLQKSKEFAESGNRVYLPLAD</sequence>
<feature type="chain" id="PRO_0000152839" description="Phosphomethylpyrimidine synthase">
    <location>
        <begin position="1"/>
        <end position="612"/>
    </location>
</feature>
<feature type="region of interest" description="Disordered" evidence="2">
    <location>
        <begin position="1"/>
        <end position="33"/>
    </location>
</feature>
<feature type="region of interest" description="Disordered" evidence="2">
    <location>
        <begin position="105"/>
        <end position="146"/>
    </location>
</feature>
<feature type="compositionally biased region" description="Low complexity" evidence="2">
    <location>
        <begin position="12"/>
        <end position="24"/>
    </location>
</feature>
<feature type="compositionally biased region" description="Basic and acidic residues" evidence="2">
    <location>
        <begin position="105"/>
        <end position="117"/>
    </location>
</feature>
<feature type="binding site" evidence="1">
    <location>
        <position position="213"/>
    </location>
    <ligand>
        <name>substrate</name>
    </ligand>
</feature>
<feature type="binding site" evidence="1">
    <location>
        <position position="242"/>
    </location>
    <ligand>
        <name>substrate</name>
    </ligand>
</feature>
<feature type="binding site" evidence="1">
    <location>
        <position position="271"/>
    </location>
    <ligand>
        <name>substrate</name>
    </ligand>
</feature>
<feature type="binding site" evidence="1">
    <location>
        <position position="307"/>
    </location>
    <ligand>
        <name>substrate</name>
    </ligand>
</feature>
<feature type="binding site" evidence="1">
    <location>
        <begin position="327"/>
        <end position="329"/>
    </location>
    <ligand>
        <name>substrate</name>
    </ligand>
</feature>
<feature type="binding site" evidence="1">
    <location>
        <begin position="368"/>
        <end position="371"/>
    </location>
    <ligand>
        <name>substrate</name>
    </ligand>
</feature>
<feature type="binding site" evidence="1">
    <location>
        <position position="407"/>
    </location>
    <ligand>
        <name>substrate</name>
    </ligand>
</feature>
<feature type="binding site" evidence="1">
    <location>
        <position position="411"/>
    </location>
    <ligand>
        <name>Zn(2+)</name>
        <dbReference type="ChEBI" id="CHEBI:29105"/>
    </ligand>
</feature>
<feature type="binding site" evidence="1">
    <location>
        <position position="434"/>
    </location>
    <ligand>
        <name>substrate</name>
    </ligand>
</feature>
<feature type="binding site" evidence="1">
    <location>
        <position position="475"/>
    </location>
    <ligand>
        <name>Zn(2+)</name>
        <dbReference type="ChEBI" id="CHEBI:29105"/>
    </ligand>
</feature>
<feature type="binding site" evidence="1">
    <location>
        <position position="555"/>
    </location>
    <ligand>
        <name>[4Fe-4S] cluster</name>
        <dbReference type="ChEBI" id="CHEBI:49883"/>
        <note>4Fe-4S-S-AdoMet</note>
    </ligand>
</feature>
<feature type="binding site" evidence="1">
    <location>
        <position position="558"/>
    </location>
    <ligand>
        <name>[4Fe-4S] cluster</name>
        <dbReference type="ChEBI" id="CHEBI:49883"/>
        <note>4Fe-4S-S-AdoMet</note>
    </ligand>
</feature>
<feature type="binding site" evidence="1">
    <location>
        <position position="563"/>
    </location>
    <ligand>
        <name>[4Fe-4S] cluster</name>
        <dbReference type="ChEBI" id="CHEBI:49883"/>
        <note>4Fe-4S-S-AdoMet</note>
    </ligand>
</feature>
<reference key="1">
    <citation type="journal article" date="2002" name="Nature">
        <title>Complete genome sequence of the model actinomycete Streptomyces coelicolor A3(2).</title>
        <authorList>
            <person name="Bentley S.D."/>
            <person name="Chater K.F."/>
            <person name="Cerdeno-Tarraga A.-M."/>
            <person name="Challis G.L."/>
            <person name="Thomson N.R."/>
            <person name="James K.D."/>
            <person name="Harris D.E."/>
            <person name="Quail M.A."/>
            <person name="Kieser H."/>
            <person name="Harper D."/>
            <person name="Bateman A."/>
            <person name="Brown S."/>
            <person name="Chandra G."/>
            <person name="Chen C.W."/>
            <person name="Collins M."/>
            <person name="Cronin A."/>
            <person name="Fraser A."/>
            <person name="Goble A."/>
            <person name="Hidalgo J."/>
            <person name="Hornsby T."/>
            <person name="Howarth S."/>
            <person name="Huang C.-H."/>
            <person name="Kieser T."/>
            <person name="Larke L."/>
            <person name="Murphy L.D."/>
            <person name="Oliver K."/>
            <person name="O'Neil S."/>
            <person name="Rabbinowitsch E."/>
            <person name="Rajandream M.A."/>
            <person name="Rutherford K.M."/>
            <person name="Rutter S."/>
            <person name="Seeger K."/>
            <person name="Saunders D."/>
            <person name="Sharp S."/>
            <person name="Squares R."/>
            <person name="Squares S."/>
            <person name="Taylor K."/>
            <person name="Warren T."/>
            <person name="Wietzorrek A."/>
            <person name="Woodward J.R."/>
            <person name="Barrell B.G."/>
            <person name="Parkhill J."/>
            <person name="Hopwood D.A."/>
        </authorList>
    </citation>
    <scope>NUCLEOTIDE SEQUENCE [LARGE SCALE GENOMIC DNA]</scope>
    <source>
        <strain>ATCC BAA-471 / A3(2) / M145</strain>
    </source>
</reference>
<proteinExistence type="inferred from homology"/>
<comment type="function">
    <text evidence="1">Catalyzes the synthesis of the hydroxymethylpyrimidine phosphate (HMP-P) moiety of thiamine from aminoimidazole ribotide (AIR) in a radical S-adenosyl-L-methionine (SAM)-dependent reaction.</text>
</comment>
<comment type="catalytic activity">
    <reaction evidence="1">
        <text>5-amino-1-(5-phospho-beta-D-ribosyl)imidazole + S-adenosyl-L-methionine = 4-amino-2-methyl-5-(phosphooxymethyl)pyrimidine + CO + 5'-deoxyadenosine + formate + L-methionine + 3 H(+)</text>
        <dbReference type="Rhea" id="RHEA:24840"/>
        <dbReference type="ChEBI" id="CHEBI:15378"/>
        <dbReference type="ChEBI" id="CHEBI:15740"/>
        <dbReference type="ChEBI" id="CHEBI:17245"/>
        <dbReference type="ChEBI" id="CHEBI:17319"/>
        <dbReference type="ChEBI" id="CHEBI:57844"/>
        <dbReference type="ChEBI" id="CHEBI:58354"/>
        <dbReference type="ChEBI" id="CHEBI:59789"/>
        <dbReference type="ChEBI" id="CHEBI:137981"/>
        <dbReference type="EC" id="4.1.99.17"/>
    </reaction>
</comment>
<comment type="cofactor">
    <cofactor evidence="1">
        <name>[4Fe-4S] cluster</name>
        <dbReference type="ChEBI" id="CHEBI:49883"/>
    </cofactor>
    <text evidence="1">Binds 1 [4Fe-4S] cluster per subunit. The cluster is coordinated with 3 cysteines and an exchangeable S-adenosyl-L-methionine.</text>
</comment>
<comment type="pathway">
    <text evidence="1">Cofactor biosynthesis; thiamine diphosphate biosynthesis.</text>
</comment>
<comment type="similarity">
    <text evidence="1">Belongs to the ThiC family.</text>
</comment>
<protein>
    <recommendedName>
        <fullName evidence="1">Phosphomethylpyrimidine synthase</fullName>
        <ecNumber evidence="1">4.1.99.17</ecNumber>
    </recommendedName>
    <alternativeName>
        <fullName evidence="1">Hydroxymethylpyrimidine phosphate synthase</fullName>
        <shortName evidence="1">HMP-P synthase</shortName>
        <shortName evidence="1">HMP-phosphate synthase</shortName>
        <shortName evidence="1">HMPP synthase</shortName>
    </alternativeName>
    <alternativeName>
        <fullName evidence="1">Thiamine biosynthesis protein ThiC</fullName>
    </alternativeName>
</protein>
<accession>Q9X9U0</accession>
<gene>
    <name evidence="1" type="primary">thiC</name>
    <name type="ordered locus">SCO3928</name>
    <name type="ORF">SCQ11.11</name>
</gene>
<name>THIC_STRCO</name>
<keyword id="KW-0004">4Fe-4S</keyword>
<keyword id="KW-0408">Iron</keyword>
<keyword id="KW-0411">Iron-sulfur</keyword>
<keyword id="KW-0456">Lyase</keyword>
<keyword id="KW-0479">Metal-binding</keyword>
<keyword id="KW-1185">Reference proteome</keyword>
<keyword id="KW-0949">S-adenosyl-L-methionine</keyword>
<keyword id="KW-0784">Thiamine biosynthesis</keyword>
<keyword id="KW-0862">Zinc</keyword>
<evidence type="ECO:0000255" key="1">
    <source>
        <dbReference type="HAMAP-Rule" id="MF_00089"/>
    </source>
</evidence>
<evidence type="ECO:0000256" key="2">
    <source>
        <dbReference type="SAM" id="MobiDB-lite"/>
    </source>
</evidence>